<keyword id="KW-0193">Cuticle</keyword>
<keyword id="KW-0903">Direct protein sequencing</keyword>
<keyword id="KW-0873">Pyrrolidone carboxylic acid</keyword>
<comment type="function">
    <text>Component of the soft endocuticle of migratory locust.</text>
</comment>
<comment type="mass spectrometry" mass="8910.8" error="1.0" method="Electrospray" evidence="2"/>
<organism>
    <name type="scientific">Locusta migratoria</name>
    <name type="common">Migratory locust</name>
    <dbReference type="NCBI Taxonomy" id="7004"/>
    <lineage>
        <taxon>Eukaryota</taxon>
        <taxon>Metazoa</taxon>
        <taxon>Ecdysozoa</taxon>
        <taxon>Arthropoda</taxon>
        <taxon>Hexapoda</taxon>
        <taxon>Insecta</taxon>
        <taxon>Pterygota</taxon>
        <taxon>Neoptera</taxon>
        <taxon>Polyneoptera</taxon>
        <taxon>Orthoptera</taxon>
        <taxon>Caelifera</taxon>
        <taxon>Acrididea</taxon>
        <taxon>Acridomorpha</taxon>
        <taxon>Acridoidea</taxon>
        <taxon>Acrididae</taxon>
        <taxon>Oedipodinae</taxon>
        <taxon>Locusta</taxon>
    </lineage>
</organism>
<name>CUD5_LOCMI</name>
<dbReference type="GO" id="GO:0062129">
    <property type="term" value="C:chitin-based extracellular matrix"/>
    <property type="evidence" value="ECO:0007669"/>
    <property type="project" value="TreeGrafter"/>
</dbReference>
<dbReference type="GO" id="GO:0008010">
    <property type="term" value="F:structural constituent of chitin-based larval cuticle"/>
    <property type="evidence" value="ECO:0007669"/>
    <property type="project" value="TreeGrafter"/>
</dbReference>
<dbReference type="InterPro" id="IPR031311">
    <property type="entry name" value="CHIT_BIND_RR_consensus"/>
</dbReference>
<dbReference type="InterPro" id="IPR050468">
    <property type="entry name" value="Cuticle_Struct_Prot"/>
</dbReference>
<dbReference type="InterPro" id="IPR000618">
    <property type="entry name" value="Insect_cuticle"/>
</dbReference>
<dbReference type="PANTHER" id="PTHR10380:SF218">
    <property type="entry name" value="ADULT CUTICLE PROTEIN 65AA-RELATED"/>
    <property type="match status" value="1"/>
</dbReference>
<dbReference type="PANTHER" id="PTHR10380">
    <property type="entry name" value="CUTICLE PROTEIN"/>
    <property type="match status" value="1"/>
</dbReference>
<dbReference type="Pfam" id="PF00379">
    <property type="entry name" value="Chitin_bind_4"/>
    <property type="match status" value="1"/>
</dbReference>
<dbReference type="PRINTS" id="PR00947">
    <property type="entry name" value="CUTICLE"/>
</dbReference>
<dbReference type="PROSITE" id="PS00233">
    <property type="entry name" value="CHIT_BIND_RR_1"/>
    <property type="match status" value="1"/>
</dbReference>
<dbReference type="PROSITE" id="PS51155">
    <property type="entry name" value="CHIT_BIND_RR_2"/>
    <property type="match status" value="1"/>
</dbReference>
<proteinExistence type="evidence at protein level"/>
<feature type="chain" id="PRO_0000196117" description="Endocuticle structural glycoprotein ABD-5">
    <location>
        <begin position="1"/>
        <end position="82"/>
    </location>
</feature>
<feature type="domain" description="Chitin-binding type R&amp;R" evidence="1">
    <location>
        <begin position="18"/>
        <end position="82"/>
    </location>
</feature>
<feature type="modified residue" description="Pyrrolidone carboxylic acid" evidence="2">
    <location>
        <position position="1"/>
    </location>
</feature>
<accession>P56561</accession>
<reference key="1">
    <citation type="journal article" date="1994" name="Comp. Biochem. Physiol.">
        <title>The primary structure of an endocuticular protein from two locus species, Locusta migratoria and Schistocerca gregaria, determined by a combination of mass spectrometry and automatic Edman degradation.</title>
        <authorList>
            <person name="Jespersen S."/>
            <person name="Hoejrup P."/>
            <person name="Andersen S.O."/>
            <person name="Roepstorff P."/>
        </authorList>
    </citation>
    <scope>PROTEIN SEQUENCE</scope>
    <scope>PYROGLUTAMATE FORMATION AT GLN-1</scope>
    <scope>MASS SPECTROMETRY</scope>
    <source>
        <tissue>Cuticle</tissue>
    </source>
</reference>
<sequence length="82" mass="8929">QTGKDATIVELTNDNDGLGQYNFAYRTSDGIARQEQGALKNAGSENEALEVQGSYTYKGVDGKDYTVTFVANENGYQPRVQS</sequence>
<evidence type="ECO:0000255" key="1">
    <source>
        <dbReference type="PROSITE-ProRule" id="PRU00497"/>
    </source>
</evidence>
<evidence type="ECO:0000269" key="2">
    <source>
    </source>
</evidence>
<protein>
    <recommendedName>
        <fullName>Endocuticle structural glycoprotein ABD-5</fullName>
    </recommendedName>
</protein>